<evidence type="ECO:0000255" key="1">
    <source>
        <dbReference type="HAMAP-Rule" id="MF_00038"/>
    </source>
</evidence>
<accession>Q07PT6</accession>
<organism>
    <name type="scientific">Rhodopseudomonas palustris (strain BisA53)</name>
    <dbReference type="NCBI Taxonomy" id="316055"/>
    <lineage>
        <taxon>Bacteria</taxon>
        <taxon>Pseudomonadati</taxon>
        <taxon>Pseudomonadota</taxon>
        <taxon>Alphaproteobacteria</taxon>
        <taxon>Hyphomicrobiales</taxon>
        <taxon>Nitrobacteraceae</taxon>
        <taxon>Rhodopseudomonas</taxon>
    </lineage>
</organism>
<feature type="chain" id="PRO_1000003041" description="Phospho-N-acetylmuramoyl-pentapeptide-transferase">
    <location>
        <begin position="1"/>
        <end position="360"/>
    </location>
</feature>
<feature type="transmembrane region" description="Helical" evidence="1">
    <location>
        <begin position="25"/>
        <end position="45"/>
    </location>
</feature>
<feature type="transmembrane region" description="Helical" evidence="1">
    <location>
        <begin position="71"/>
        <end position="91"/>
    </location>
</feature>
<feature type="transmembrane region" description="Helical" evidence="1">
    <location>
        <begin position="94"/>
        <end position="114"/>
    </location>
</feature>
<feature type="transmembrane region" description="Helical" evidence="1">
    <location>
        <begin position="129"/>
        <end position="148"/>
    </location>
</feature>
<feature type="transmembrane region" description="Helical" evidence="1">
    <location>
        <begin position="168"/>
        <end position="188"/>
    </location>
</feature>
<feature type="transmembrane region" description="Helical" evidence="1">
    <location>
        <begin position="199"/>
        <end position="219"/>
    </location>
</feature>
<feature type="transmembrane region" description="Helical" evidence="1">
    <location>
        <begin position="239"/>
        <end position="259"/>
    </location>
</feature>
<feature type="transmembrane region" description="Helical" evidence="1">
    <location>
        <begin position="263"/>
        <end position="283"/>
    </location>
</feature>
<feature type="transmembrane region" description="Helical" evidence="1">
    <location>
        <begin position="288"/>
        <end position="308"/>
    </location>
</feature>
<feature type="transmembrane region" description="Helical" evidence="1">
    <location>
        <begin position="337"/>
        <end position="357"/>
    </location>
</feature>
<reference key="1">
    <citation type="submission" date="2006-09" db="EMBL/GenBank/DDBJ databases">
        <title>Complete sequence of Rhodopseudomonas palustris BisA53.</title>
        <authorList>
            <consortium name="US DOE Joint Genome Institute"/>
            <person name="Copeland A."/>
            <person name="Lucas S."/>
            <person name="Lapidus A."/>
            <person name="Barry K."/>
            <person name="Detter J.C."/>
            <person name="Glavina del Rio T."/>
            <person name="Hammon N."/>
            <person name="Israni S."/>
            <person name="Dalin E."/>
            <person name="Tice H."/>
            <person name="Pitluck S."/>
            <person name="Chain P."/>
            <person name="Malfatti S."/>
            <person name="Shin M."/>
            <person name="Vergez L."/>
            <person name="Schmutz J."/>
            <person name="Larimer F."/>
            <person name="Land M."/>
            <person name="Hauser L."/>
            <person name="Pelletier D.A."/>
            <person name="Kyrpides N."/>
            <person name="Kim E."/>
            <person name="Harwood C.S."/>
            <person name="Oda Y."/>
            <person name="Richardson P."/>
        </authorList>
    </citation>
    <scope>NUCLEOTIDE SEQUENCE [LARGE SCALE GENOMIC DNA]</scope>
    <source>
        <strain>BisA53</strain>
    </source>
</reference>
<keyword id="KW-0131">Cell cycle</keyword>
<keyword id="KW-0132">Cell division</keyword>
<keyword id="KW-0997">Cell inner membrane</keyword>
<keyword id="KW-1003">Cell membrane</keyword>
<keyword id="KW-0133">Cell shape</keyword>
<keyword id="KW-0961">Cell wall biogenesis/degradation</keyword>
<keyword id="KW-0460">Magnesium</keyword>
<keyword id="KW-0472">Membrane</keyword>
<keyword id="KW-0479">Metal-binding</keyword>
<keyword id="KW-0573">Peptidoglycan synthesis</keyword>
<keyword id="KW-0808">Transferase</keyword>
<keyword id="KW-0812">Transmembrane</keyword>
<keyword id="KW-1133">Transmembrane helix</keyword>
<proteinExistence type="inferred from homology"/>
<protein>
    <recommendedName>
        <fullName evidence="1">Phospho-N-acetylmuramoyl-pentapeptide-transferase</fullName>
        <ecNumber evidence="1">2.7.8.13</ecNumber>
    </recommendedName>
    <alternativeName>
        <fullName evidence="1">UDP-MurNAc-pentapeptide phosphotransferase</fullName>
    </alternativeName>
</protein>
<sequence>MLYWLVDFASSVPALNVFRYITFRTGGAMVTGALFVFMFGPWIIDNLRLRQGKGQPIRSDGPQSHLSKKGTPTMGGLMILSGLVVGTVLWANPLNPYVWIVLAVTLGFGFVGFYDDYLKVTKQSDKGFSGRTRLAIETIIAAAACYALMRLGRDPLSSSLAVPFLKDTAIYLGWFFVIFGGFIVVGAGNAVNLTDGLDGLAIVPVMIAAASFGLVSYLAGNAVFADYLQINYVAGTGELAVLCGALLGAGLGFLWFNAPPASIFMGDTGSLALGGMLGTIAVAVKHEFVLAVIGGLFVLEAVSVIVQVASFKLTGKRVFRMAPIHHHFEQKGWTEPQIVIRFWIISVMLALAGLSTLKLR</sequence>
<comment type="function">
    <text evidence="1">Catalyzes the initial step of the lipid cycle reactions in the biosynthesis of the cell wall peptidoglycan: transfers peptidoglycan precursor phospho-MurNAc-pentapeptide from UDP-MurNAc-pentapeptide onto the lipid carrier undecaprenyl phosphate, yielding undecaprenyl-pyrophosphoryl-MurNAc-pentapeptide, known as lipid I.</text>
</comment>
<comment type="catalytic activity">
    <reaction evidence="1">
        <text>UDP-N-acetyl-alpha-D-muramoyl-L-alanyl-gamma-D-glutamyl-meso-2,6-diaminopimeloyl-D-alanyl-D-alanine + di-trans,octa-cis-undecaprenyl phosphate = di-trans,octa-cis-undecaprenyl diphospho-N-acetyl-alpha-D-muramoyl-L-alanyl-D-glutamyl-meso-2,6-diaminopimeloyl-D-alanyl-D-alanine + UMP</text>
        <dbReference type="Rhea" id="RHEA:28386"/>
        <dbReference type="ChEBI" id="CHEBI:57865"/>
        <dbReference type="ChEBI" id="CHEBI:60392"/>
        <dbReference type="ChEBI" id="CHEBI:61386"/>
        <dbReference type="ChEBI" id="CHEBI:61387"/>
        <dbReference type="EC" id="2.7.8.13"/>
    </reaction>
</comment>
<comment type="cofactor">
    <cofactor evidence="1">
        <name>Mg(2+)</name>
        <dbReference type="ChEBI" id="CHEBI:18420"/>
    </cofactor>
</comment>
<comment type="pathway">
    <text evidence="1">Cell wall biogenesis; peptidoglycan biosynthesis.</text>
</comment>
<comment type="subcellular location">
    <subcellularLocation>
        <location evidence="1">Cell inner membrane</location>
        <topology evidence="1">Multi-pass membrane protein</topology>
    </subcellularLocation>
</comment>
<comment type="similarity">
    <text evidence="1">Belongs to the glycosyltransferase 4 family. MraY subfamily.</text>
</comment>
<gene>
    <name evidence="1" type="primary">mraY</name>
    <name type="ordered locus">RPE_2104</name>
</gene>
<name>MRAY_RHOP5</name>
<dbReference type="EC" id="2.7.8.13" evidence="1"/>
<dbReference type="EMBL" id="CP000463">
    <property type="protein sequence ID" value="ABJ06048.1"/>
    <property type="molecule type" value="Genomic_DNA"/>
</dbReference>
<dbReference type="SMR" id="Q07PT6"/>
<dbReference type="STRING" id="316055.RPE_2104"/>
<dbReference type="KEGG" id="rpe:RPE_2104"/>
<dbReference type="eggNOG" id="COG0472">
    <property type="taxonomic scope" value="Bacteria"/>
</dbReference>
<dbReference type="HOGENOM" id="CLU_023982_0_0_5"/>
<dbReference type="OrthoDB" id="9805475at2"/>
<dbReference type="UniPathway" id="UPA00219"/>
<dbReference type="GO" id="GO:0005886">
    <property type="term" value="C:plasma membrane"/>
    <property type="evidence" value="ECO:0007669"/>
    <property type="project" value="UniProtKB-SubCell"/>
</dbReference>
<dbReference type="GO" id="GO:0046872">
    <property type="term" value="F:metal ion binding"/>
    <property type="evidence" value="ECO:0007669"/>
    <property type="project" value="UniProtKB-KW"/>
</dbReference>
<dbReference type="GO" id="GO:0008963">
    <property type="term" value="F:phospho-N-acetylmuramoyl-pentapeptide-transferase activity"/>
    <property type="evidence" value="ECO:0007669"/>
    <property type="project" value="UniProtKB-UniRule"/>
</dbReference>
<dbReference type="GO" id="GO:0051992">
    <property type="term" value="F:UDP-N-acetylmuramoyl-L-alanyl-D-glutamyl-meso-2,6-diaminopimelyl-D-alanyl-D-alanine:undecaprenyl-phosphate transferase activity"/>
    <property type="evidence" value="ECO:0007669"/>
    <property type="project" value="RHEA"/>
</dbReference>
<dbReference type="GO" id="GO:0051301">
    <property type="term" value="P:cell division"/>
    <property type="evidence" value="ECO:0007669"/>
    <property type="project" value="UniProtKB-KW"/>
</dbReference>
<dbReference type="GO" id="GO:0071555">
    <property type="term" value="P:cell wall organization"/>
    <property type="evidence" value="ECO:0007669"/>
    <property type="project" value="UniProtKB-KW"/>
</dbReference>
<dbReference type="GO" id="GO:0009252">
    <property type="term" value="P:peptidoglycan biosynthetic process"/>
    <property type="evidence" value="ECO:0007669"/>
    <property type="project" value="UniProtKB-UniRule"/>
</dbReference>
<dbReference type="GO" id="GO:0008360">
    <property type="term" value="P:regulation of cell shape"/>
    <property type="evidence" value="ECO:0007669"/>
    <property type="project" value="UniProtKB-KW"/>
</dbReference>
<dbReference type="CDD" id="cd06852">
    <property type="entry name" value="GT_MraY"/>
    <property type="match status" value="1"/>
</dbReference>
<dbReference type="HAMAP" id="MF_00038">
    <property type="entry name" value="MraY"/>
    <property type="match status" value="1"/>
</dbReference>
<dbReference type="InterPro" id="IPR000715">
    <property type="entry name" value="Glycosyl_transferase_4"/>
</dbReference>
<dbReference type="InterPro" id="IPR003524">
    <property type="entry name" value="PNAcMuramoyl-5peptid_Trfase"/>
</dbReference>
<dbReference type="InterPro" id="IPR018480">
    <property type="entry name" value="PNAcMuramoyl-5peptid_Trfase_CS"/>
</dbReference>
<dbReference type="NCBIfam" id="TIGR00445">
    <property type="entry name" value="mraY"/>
    <property type="match status" value="1"/>
</dbReference>
<dbReference type="PANTHER" id="PTHR22926">
    <property type="entry name" value="PHOSPHO-N-ACETYLMURAMOYL-PENTAPEPTIDE-TRANSFERASE"/>
    <property type="match status" value="1"/>
</dbReference>
<dbReference type="PANTHER" id="PTHR22926:SF5">
    <property type="entry name" value="PHOSPHO-N-ACETYLMURAMOYL-PENTAPEPTIDE-TRANSFERASE HOMOLOG"/>
    <property type="match status" value="1"/>
</dbReference>
<dbReference type="Pfam" id="PF00953">
    <property type="entry name" value="Glycos_transf_4"/>
    <property type="match status" value="1"/>
</dbReference>
<dbReference type="Pfam" id="PF10555">
    <property type="entry name" value="MraY_sig1"/>
    <property type="match status" value="1"/>
</dbReference>
<dbReference type="PROSITE" id="PS01347">
    <property type="entry name" value="MRAY_1"/>
    <property type="match status" value="1"/>
</dbReference>
<dbReference type="PROSITE" id="PS01348">
    <property type="entry name" value="MRAY_2"/>
    <property type="match status" value="1"/>
</dbReference>